<accession>Q76P36</accession>
<accession>Q55A54</accession>
<feature type="chain" id="PRO_0000325949" description="Small ribosomal subunit protein uS14">
    <location>
        <begin position="1"/>
        <end position="55"/>
    </location>
</feature>
<feature type="binding site" evidence="1">
    <location>
        <position position="20"/>
    </location>
    <ligand>
        <name>Zn(2+)</name>
        <dbReference type="ChEBI" id="CHEBI:29105"/>
    </ligand>
</feature>
<feature type="binding site" evidence="1">
    <location>
        <position position="23"/>
    </location>
    <ligand>
        <name>Zn(2+)</name>
        <dbReference type="ChEBI" id="CHEBI:29105"/>
    </ligand>
</feature>
<feature type="binding site" evidence="1">
    <location>
        <position position="38"/>
    </location>
    <ligand>
        <name>Zn(2+)</name>
        <dbReference type="ChEBI" id="CHEBI:29105"/>
    </ligand>
</feature>
<feature type="binding site" evidence="1">
    <location>
        <position position="41"/>
    </location>
    <ligand>
        <name>Zn(2+)</name>
        <dbReference type="ChEBI" id="CHEBI:29105"/>
    </ligand>
</feature>
<proteinExistence type="inferred from homology"/>
<organism>
    <name type="scientific">Dictyostelium discoideum</name>
    <name type="common">Social amoeba</name>
    <dbReference type="NCBI Taxonomy" id="44689"/>
    <lineage>
        <taxon>Eukaryota</taxon>
        <taxon>Amoebozoa</taxon>
        <taxon>Evosea</taxon>
        <taxon>Eumycetozoa</taxon>
        <taxon>Dictyostelia</taxon>
        <taxon>Dictyosteliales</taxon>
        <taxon>Dictyosteliaceae</taxon>
        <taxon>Dictyostelium</taxon>
    </lineage>
</organism>
<reference key="1">
    <citation type="journal article" date="2002" name="Nature">
        <title>Sequence and analysis of chromosome 2 of Dictyostelium discoideum.</title>
        <authorList>
            <person name="Gloeckner G."/>
            <person name="Eichinger L."/>
            <person name="Szafranski K."/>
            <person name="Pachebat J.A."/>
            <person name="Bankier A.T."/>
            <person name="Dear P.H."/>
            <person name="Lehmann R."/>
            <person name="Baumgart C."/>
            <person name="Parra G."/>
            <person name="Abril J.F."/>
            <person name="Guigo R."/>
            <person name="Kumpf K."/>
            <person name="Tunggal B."/>
            <person name="Cox E.C."/>
            <person name="Quail M.A."/>
            <person name="Platzer M."/>
            <person name="Rosenthal A."/>
            <person name="Noegel A.A."/>
        </authorList>
    </citation>
    <scope>NUCLEOTIDE SEQUENCE [LARGE SCALE GENOMIC DNA]</scope>
    <source>
        <strain>AX4</strain>
    </source>
</reference>
<reference key="2">
    <citation type="journal article" date="2005" name="Nature">
        <title>The genome of the social amoeba Dictyostelium discoideum.</title>
        <authorList>
            <person name="Eichinger L."/>
            <person name="Pachebat J.A."/>
            <person name="Gloeckner G."/>
            <person name="Rajandream M.A."/>
            <person name="Sucgang R."/>
            <person name="Berriman M."/>
            <person name="Song J."/>
            <person name="Olsen R."/>
            <person name="Szafranski K."/>
            <person name="Xu Q."/>
            <person name="Tunggal B."/>
            <person name="Kummerfeld S."/>
            <person name="Madera M."/>
            <person name="Konfortov B.A."/>
            <person name="Rivero F."/>
            <person name="Bankier A.T."/>
            <person name="Lehmann R."/>
            <person name="Hamlin N."/>
            <person name="Davies R."/>
            <person name="Gaudet P."/>
            <person name="Fey P."/>
            <person name="Pilcher K."/>
            <person name="Chen G."/>
            <person name="Saunders D."/>
            <person name="Sodergren E.J."/>
            <person name="Davis P."/>
            <person name="Kerhornou A."/>
            <person name="Nie X."/>
            <person name="Hall N."/>
            <person name="Anjard C."/>
            <person name="Hemphill L."/>
            <person name="Bason N."/>
            <person name="Farbrother P."/>
            <person name="Desany B."/>
            <person name="Just E."/>
            <person name="Morio T."/>
            <person name="Rost R."/>
            <person name="Churcher C.M."/>
            <person name="Cooper J."/>
            <person name="Haydock S."/>
            <person name="van Driessche N."/>
            <person name="Cronin A."/>
            <person name="Goodhead I."/>
            <person name="Muzny D.M."/>
            <person name="Mourier T."/>
            <person name="Pain A."/>
            <person name="Lu M."/>
            <person name="Harper D."/>
            <person name="Lindsay R."/>
            <person name="Hauser H."/>
            <person name="James K.D."/>
            <person name="Quiles M."/>
            <person name="Madan Babu M."/>
            <person name="Saito T."/>
            <person name="Buchrieser C."/>
            <person name="Wardroper A."/>
            <person name="Felder M."/>
            <person name="Thangavelu M."/>
            <person name="Johnson D."/>
            <person name="Knights A."/>
            <person name="Loulseged H."/>
            <person name="Mungall K.L."/>
            <person name="Oliver K."/>
            <person name="Price C."/>
            <person name="Quail M.A."/>
            <person name="Urushihara H."/>
            <person name="Hernandez J."/>
            <person name="Rabbinowitsch E."/>
            <person name="Steffen D."/>
            <person name="Sanders M."/>
            <person name="Ma J."/>
            <person name="Kohara Y."/>
            <person name="Sharp S."/>
            <person name="Simmonds M.N."/>
            <person name="Spiegler S."/>
            <person name="Tivey A."/>
            <person name="Sugano S."/>
            <person name="White B."/>
            <person name="Walker D."/>
            <person name="Woodward J.R."/>
            <person name="Winckler T."/>
            <person name="Tanaka Y."/>
            <person name="Shaulsky G."/>
            <person name="Schleicher M."/>
            <person name="Weinstock G.M."/>
            <person name="Rosenthal A."/>
            <person name="Cox E.C."/>
            <person name="Chisholm R.L."/>
            <person name="Gibbs R.A."/>
            <person name="Loomis W.F."/>
            <person name="Platzer M."/>
            <person name="Kay R.R."/>
            <person name="Williams J.G."/>
            <person name="Dear P.H."/>
            <person name="Noegel A.A."/>
            <person name="Barrell B.G."/>
            <person name="Kuspa A."/>
        </authorList>
    </citation>
    <scope>NUCLEOTIDE SEQUENCE [LARGE SCALE GENOMIC DNA]</scope>
    <source>
        <strain>AX4</strain>
    </source>
</reference>
<protein>
    <recommendedName>
        <fullName evidence="2">Small ribosomal subunit protein uS14</fullName>
    </recommendedName>
    <alternativeName>
        <fullName>40S ribosomal protein S29</fullName>
    </alternativeName>
</protein>
<comment type="cofactor">
    <cofactor evidence="2">
        <name>Zn(2+)</name>
        <dbReference type="ChEBI" id="CHEBI:29105"/>
    </cofactor>
    <text evidence="2">Binds 1 zinc ion per subunit.</text>
</comment>
<comment type="similarity">
    <text evidence="2">Belongs to the universal ribosomal protein uS14 family.</text>
</comment>
<evidence type="ECO:0000255" key="1"/>
<evidence type="ECO:0000305" key="2"/>
<keyword id="KW-0479">Metal-binding</keyword>
<keyword id="KW-1185">Reference proteome</keyword>
<keyword id="KW-0687">Ribonucleoprotein</keyword>
<keyword id="KW-0689">Ribosomal protein</keyword>
<keyword id="KW-0862">Zinc</keyword>
<name>RS29_DICDI</name>
<dbReference type="EMBL" id="AAFI02000008">
    <property type="protein sequence ID" value="EAL71306.1"/>
    <property type="molecule type" value="Genomic_DNA"/>
</dbReference>
<dbReference type="RefSeq" id="XP_645130.1">
    <property type="nucleotide sequence ID" value="XM_640038.1"/>
</dbReference>
<dbReference type="SMR" id="Q76P36"/>
<dbReference type="FunCoup" id="Q76P36">
    <property type="interactions" value="366"/>
</dbReference>
<dbReference type="STRING" id="44689.Q76P36"/>
<dbReference type="PaxDb" id="44689-DDB0231066"/>
<dbReference type="EnsemblProtists" id="EAL71306">
    <property type="protein sequence ID" value="EAL71306"/>
    <property type="gene ID" value="DDB_G0272308"/>
</dbReference>
<dbReference type="GeneID" id="8618300"/>
<dbReference type="KEGG" id="ddi:DDB_G0272308"/>
<dbReference type="dictyBase" id="DDB_G0272308">
    <property type="gene designation" value="rps29"/>
</dbReference>
<dbReference type="VEuPathDB" id="AmoebaDB:DDB_G0272308"/>
<dbReference type="eggNOG" id="KOG3506">
    <property type="taxonomic scope" value="Eukaryota"/>
</dbReference>
<dbReference type="HOGENOM" id="CLU_177289_1_1_1"/>
<dbReference type="InParanoid" id="Q76P36"/>
<dbReference type="OMA" id="HCFREIA"/>
<dbReference type="PhylomeDB" id="Q76P36"/>
<dbReference type="Reactome" id="R-DDI-156827">
    <property type="pathway name" value="L13a-mediated translational silencing of Ceruloplasmin expression"/>
</dbReference>
<dbReference type="Reactome" id="R-DDI-1799339">
    <property type="pathway name" value="SRP-dependent cotranslational protein targeting to membrane"/>
</dbReference>
<dbReference type="Reactome" id="R-DDI-72689">
    <property type="pathway name" value="Formation of a pool of free 40S subunits"/>
</dbReference>
<dbReference type="Reactome" id="R-DDI-72695">
    <property type="pathway name" value="Formation of the ternary complex, and subsequently, the 43S complex"/>
</dbReference>
<dbReference type="Reactome" id="R-DDI-72702">
    <property type="pathway name" value="Ribosomal scanning and start codon recognition"/>
</dbReference>
<dbReference type="Reactome" id="R-DDI-72706">
    <property type="pathway name" value="GTP hydrolysis and joining of the 60S ribosomal subunit"/>
</dbReference>
<dbReference type="Reactome" id="R-DDI-975956">
    <property type="pathway name" value="Nonsense Mediated Decay (NMD) independent of the Exon Junction Complex (EJC)"/>
</dbReference>
<dbReference type="Reactome" id="R-DDI-975957">
    <property type="pathway name" value="Nonsense Mediated Decay (NMD) enhanced by the Exon Junction Complex (EJC)"/>
</dbReference>
<dbReference type="PRO" id="PR:Q76P36"/>
<dbReference type="Proteomes" id="UP000002195">
    <property type="component" value="Chromosome 2"/>
</dbReference>
<dbReference type="GO" id="GO:0022627">
    <property type="term" value="C:cytosolic small ribosomal subunit"/>
    <property type="evidence" value="ECO:0000318"/>
    <property type="project" value="GO_Central"/>
</dbReference>
<dbReference type="GO" id="GO:0031012">
    <property type="term" value="C:extracellular matrix"/>
    <property type="evidence" value="ECO:0007005"/>
    <property type="project" value="dictyBase"/>
</dbReference>
<dbReference type="GO" id="GO:0003735">
    <property type="term" value="F:structural constituent of ribosome"/>
    <property type="evidence" value="ECO:0000250"/>
    <property type="project" value="dictyBase"/>
</dbReference>
<dbReference type="GO" id="GO:0008270">
    <property type="term" value="F:zinc ion binding"/>
    <property type="evidence" value="ECO:0000318"/>
    <property type="project" value="GO_Central"/>
</dbReference>
<dbReference type="GO" id="GO:0002181">
    <property type="term" value="P:cytoplasmic translation"/>
    <property type="evidence" value="ECO:0000318"/>
    <property type="project" value="GO_Central"/>
</dbReference>
<dbReference type="FunFam" id="4.10.830.10:FF:000002">
    <property type="entry name" value="40S ribosomal protein S29"/>
    <property type="match status" value="1"/>
</dbReference>
<dbReference type="Gene3D" id="4.10.830.10">
    <property type="entry name" value="30s Ribosomal Protein S14, Chain N"/>
    <property type="match status" value="1"/>
</dbReference>
<dbReference type="InterPro" id="IPR001209">
    <property type="entry name" value="Ribosomal_uS14"/>
</dbReference>
<dbReference type="InterPro" id="IPR018271">
    <property type="entry name" value="Ribosomal_uS14_CS"/>
</dbReference>
<dbReference type="InterPro" id="IPR039744">
    <property type="entry name" value="RIbosomal_uS14_euk_arc"/>
</dbReference>
<dbReference type="InterPro" id="IPR043140">
    <property type="entry name" value="Ribosomal_uS14_sf"/>
</dbReference>
<dbReference type="NCBIfam" id="NF004424">
    <property type="entry name" value="PRK05766.1"/>
    <property type="match status" value="1"/>
</dbReference>
<dbReference type="PANTHER" id="PTHR12010">
    <property type="entry name" value="40S RIBOSOMAL PROTEIN S29"/>
    <property type="match status" value="1"/>
</dbReference>
<dbReference type="PANTHER" id="PTHR12010:SF2">
    <property type="entry name" value="40S RIBOSOMAL PROTEIN S29"/>
    <property type="match status" value="1"/>
</dbReference>
<dbReference type="Pfam" id="PF00253">
    <property type="entry name" value="Ribosomal_S14"/>
    <property type="match status" value="1"/>
</dbReference>
<dbReference type="PROSITE" id="PS00527">
    <property type="entry name" value="RIBOSOMAL_S14"/>
    <property type="match status" value="1"/>
</dbReference>
<gene>
    <name type="primary">rps29</name>
    <name type="ORF">DDB_G0272308</name>
</gene>
<sequence length="55" mass="6556">MARELWLTHPRNFGPGSRTCRKCGNHHGIIRKYDLNMCRRCFRTDAEAIGFNKYR</sequence>